<accession>Q9ZAH6</accession>
<accession>Q2FWI5</accession>
<comment type="function">
    <text evidence="1">Transfers the 4'-phosphopantetheine moiety from coenzyme A to a Ser of acyl-carrier-protein.</text>
</comment>
<comment type="catalytic activity">
    <reaction evidence="1">
        <text>apo-[ACP] + CoA = holo-[ACP] + adenosine 3',5'-bisphosphate + H(+)</text>
        <dbReference type="Rhea" id="RHEA:12068"/>
        <dbReference type="Rhea" id="RHEA-COMP:9685"/>
        <dbReference type="Rhea" id="RHEA-COMP:9690"/>
        <dbReference type="ChEBI" id="CHEBI:15378"/>
        <dbReference type="ChEBI" id="CHEBI:29999"/>
        <dbReference type="ChEBI" id="CHEBI:57287"/>
        <dbReference type="ChEBI" id="CHEBI:58343"/>
        <dbReference type="ChEBI" id="CHEBI:64479"/>
        <dbReference type="EC" id="2.7.8.7"/>
    </reaction>
</comment>
<comment type="cofactor">
    <cofactor evidence="1">
        <name>Mg(2+)</name>
        <dbReference type="ChEBI" id="CHEBI:18420"/>
    </cofactor>
</comment>
<comment type="subcellular location">
    <subcellularLocation>
        <location evidence="1">Cytoplasm</location>
    </subcellularLocation>
</comment>
<comment type="similarity">
    <text evidence="1">Belongs to the P-Pant transferase superfamily. AcpS family.</text>
</comment>
<organism>
    <name type="scientific">Staphylococcus aureus (strain NCTC 8325 / PS 47)</name>
    <dbReference type="NCBI Taxonomy" id="93061"/>
    <lineage>
        <taxon>Bacteria</taxon>
        <taxon>Bacillati</taxon>
        <taxon>Bacillota</taxon>
        <taxon>Bacilli</taxon>
        <taxon>Bacillales</taxon>
        <taxon>Staphylococcaceae</taxon>
        <taxon>Staphylococcus</taxon>
    </lineage>
</organism>
<dbReference type="EC" id="2.7.8.7" evidence="1"/>
<dbReference type="EMBL" id="Y16431">
    <property type="protein sequence ID" value="CAA76220.1"/>
    <property type="molecule type" value="Genomic_DNA"/>
</dbReference>
<dbReference type="EMBL" id="CP000253">
    <property type="protein sequence ID" value="ABD31340.1"/>
    <property type="molecule type" value="Genomic_DNA"/>
</dbReference>
<dbReference type="RefSeq" id="WP_000581200.1">
    <property type="nucleotide sequence ID" value="NZ_LS483365.1"/>
</dbReference>
<dbReference type="RefSeq" id="YP_500785.1">
    <property type="nucleotide sequence ID" value="NC_007795.1"/>
</dbReference>
<dbReference type="SMR" id="Q9ZAH6"/>
<dbReference type="STRING" id="93061.SAOUHSC_02306"/>
<dbReference type="PaxDb" id="1280-SAXN108_2316"/>
<dbReference type="GeneID" id="3920931"/>
<dbReference type="KEGG" id="sao:SAOUHSC_02306"/>
<dbReference type="PATRIC" id="fig|93061.5.peg.2090"/>
<dbReference type="eggNOG" id="COG0736">
    <property type="taxonomic scope" value="Bacteria"/>
</dbReference>
<dbReference type="HOGENOM" id="CLU_089696_1_2_9"/>
<dbReference type="OrthoDB" id="517356at2"/>
<dbReference type="PRO" id="PR:Q9ZAH6"/>
<dbReference type="Proteomes" id="UP000008816">
    <property type="component" value="Chromosome"/>
</dbReference>
<dbReference type="GO" id="GO:0005737">
    <property type="term" value="C:cytoplasm"/>
    <property type="evidence" value="ECO:0007669"/>
    <property type="project" value="UniProtKB-SubCell"/>
</dbReference>
<dbReference type="GO" id="GO:0008897">
    <property type="term" value="F:holo-[acyl-carrier-protein] synthase activity"/>
    <property type="evidence" value="ECO:0007669"/>
    <property type="project" value="UniProtKB-UniRule"/>
</dbReference>
<dbReference type="GO" id="GO:0000287">
    <property type="term" value="F:magnesium ion binding"/>
    <property type="evidence" value="ECO:0007669"/>
    <property type="project" value="UniProtKB-UniRule"/>
</dbReference>
<dbReference type="GO" id="GO:0006633">
    <property type="term" value="P:fatty acid biosynthetic process"/>
    <property type="evidence" value="ECO:0007669"/>
    <property type="project" value="UniProtKB-UniRule"/>
</dbReference>
<dbReference type="Gene3D" id="3.90.470.20">
    <property type="entry name" value="4'-phosphopantetheinyl transferase domain"/>
    <property type="match status" value="1"/>
</dbReference>
<dbReference type="HAMAP" id="MF_00101">
    <property type="entry name" value="AcpS"/>
    <property type="match status" value="1"/>
</dbReference>
<dbReference type="InterPro" id="IPR008278">
    <property type="entry name" value="4-PPantetheinyl_Trfase_dom"/>
</dbReference>
<dbReference type="InterPro" id="IPR037143">
    <property type="entry name" value="4-PPantetheinyl_Trfase_dom_sf"/>
</dbReference>
<dbReference type="InterPro" id="IPR002582">
    <property type="entry name" value="ACPS"/>
</dbReference>
<dbReference type="InterPro" id="IPR004568">
    <property type="entry name" value="Ppantetheine-prot_Trfase_dom"/>
</dbReference>
<dbReference type="NCBIfam" id="TIGR00516">
    <property type="entry name" value="acpS"/>
    <property type="match status" value="1"/>
</dbReference>
<dbReference type="NCBIfam" id="TIGR00556">
    <property type="entry name" value="pantethn_trn"/>
    <property type="match status" value="1"/>
</dbReference>
<dbReference type="Pfam" id="PF01648">
    <property type="entry name" value="ACPS"/>
    <property type="match status" value="1"/>
</dbReference>
<dbReference type="SUPFAM" id="SSF56214">
    <property type="entry name" value="4'-phosphopantetheinyl transferase"/>
    <property type="match status" value="1"/>
</dbReference>
<gene>
    <name evidence="1" type="primary">acpS</name>
    <name type="synonym">dpj</name>
    <name type="ordered locus">SAOUHSC_02306</name>
</gene>
<evidence type="ECO:0000255" key="1">
    <source>
        <dbReference type="HAMAP-Rule" id="MF_00101"/>
    </source>
</evidence>
<name>ACPS_STAA8</name>
<proteinExistence type="inferred from homology"/>
<protein>
    <recommendedName>
        <fullName evidence="1">Holo-[acyl-carrier-protein] synthase</fullName>
        <shortName evidence="1">Holo-ACP synthase</shortName>
        <ecNumber evidence="1">2.7.8.7</ecNumber>
    </recommendedName>
    <alternativeName>
        <fullName evidence="1">4'-phosphopantetheinyl transferase AcpS</fullName>
    </alternativeName>
</protein>
<sequence length="119" mass="13606">MIHGIGVDLIEIDRIQALYSKQPKLVERILTKNEQHKFNNFTHEQRKIEFLAGRFATKEAFSKALGTGLGKHVAFNDIDCYNDELGKPKIDYEGFIVHVSISHTEHYAMSQVVLEKSAF</sequence>
<feature type="chain" id="PRO_0000175699" description="Holo-[acyl-carrier-protein] synthase">
    <location>
        <begin position="1"/>
        <end position="119"/>
    </location>
</feature>
<feature type="binding site" evidence="1">
    <location>
        <position position="8"/>
    </location>
    <ligand>
        <name>Mg(2+)</name>
        <dbReference type="ChEBI" id="CHEBI:18420"/>
    </ligand>
</feature>
<feature type="binding site" evidence="1">
    <location>
        <position position="59"/>
    </location>
    <ligand>
        <name>Mg(2+)</name>
        <dbReference type="ChEBI" id="CHEBI:18420"/>
    </ligand>
</feature>
<keyword id="KW-0963">Cytoplasm</keyword>
<keyword id="KW-0275">Fatty acid biosynthesis</keyword>
<keyword id="KW-0276">Fatty acid metabolism</keyword>
<keyword id="KW-0444">Lipid biosynthesis</keyword>
<keyword id="KW-0443">Lipid metabolism</keyword>
<keyword id="KW-0460">Magnesium</keyword>
<keyword id="KW-0479">Metal-binding</keyword>
<keyword id="KW-1185">Reference proteome</keyword>
<keyword id="KW-0808">Transferase</keyword>
<reference key="1">
    <citation type="journal article" date="1998" name="Gene">
        <title>Sequence of the putative alanine racemase operon in Staphylococcus aureus: insertional interruption of this operon reduces D-alanine substitution of lipoteichoic acid and autolysis.</title>
        <authorList>
            <person name="Kullik I."/>
            <person name="Jenni R."/>
            <person name="Berger-Baechi B."/>
        </authorList>
    </citation>
    <scope>NUCLEOTIDE SEQUENCE [GENOMIC DNA]</scope>
</reference>
<reference key="2">
    <citation type="book" date="2006" name="Gram positive pathogens, 2nd edition">
        <title>The Staphylococcus aureus NCTC 8325 genome.</title>
        <editorList>
            <person name="Fischetti V."/>
            <person name="Novick R."/>
            <person name="Ferretti J."/>
            <person name="Portnoy D."/>
            <person name="Rood J."/>
        </editorList>
        <authorList>
            <person name="Gillaspy A.F."/>
            <person name="Worrell V."/>
            <person name="Orvis J."/>
            <person name="Roe B.A."/>
            <person name="Dyer D.W."/>
            <person name="Iandolo J.J."/>
        </authorList>
    </citation>
    <scope>NUCLEOTIDE SEQUENCE [LARGE SCALE GENOMIC DNA]</scope>
    <source>
        <strain>NCTC 8325 / PS 47</strain>
    </source>
</reference>